<organism>
    <name type="scientific">Acanthamoeba polyphaga mimivirus</name>
    <name type="common">APMV</name>
    <dbReference type="NCBI Taxonomy" id="212035"/>
    <lineage>
        <taxon>Viruses</taxon>
        <taxon>Varidnaviria</taxon>
        <taxon>Bamfordvirae</taxon>
        <taxon>Nucleocytoviricota</taxon>
        <taxon>Megaviricetes</taxon>
        <taxon>Imitervirales</taxon>
        <taxon>Mimiviridae</taxon>
        <taxon>Megamimivirinae</taxon>
        <taxon>Mimivirus</taxon>
        <taxon>Mimivirus bradfordmassiliense</taxon>
    </lineage>
</organism>
<dbReference type="EMBL" id="AY653733">
    <property type="protein sequence ID" value="AAV50639.1"/>
    <property type="molecule type" value="Genomic_DNA"/>
</dbReference>
<dbReference type="KEGG" id="vg:9924991"/>
<dbReference type="Proteomes" id="UP000001134">
    <property type="component" value="Genome"/>
</dbReference>
<proteinExistence type="predicted"/>
<name>YR370_MIMIV</name>
<keyword id="KW-0175">Coiled coil</keyword>
<keyword id="KW-1185">Reference proteome</keyword>
<gene>
    <name type="ordered locus">MIMI_R370</name>
</gene>
<sequence>MTDTDFDNAADLHNLMIKTLEPEELYKKLENNLRKIETSYLDSKHCQDFKRKIEYYKIVPLISETKEIIKVLIQKIETLEIKEGSPKHSKIDEYMSVLSVPGLNLGEILVLVKELLTIDNDLPKNAHVHENIQDDVVYGNFSPN</sequence>
<accession>Q5UQV4</accession>
<reference key="1">
    <citation type="journal article" date="2004" name="Science">
        <title>The 1.2-megabase genome sequence of Mimivirus.</title>
        <authorList>
            <person name="Raoult D."/>
            <person name="Audic S."/>
            <person name="Robert C."/>
            <person name="Abergel C."/>
            <person name="Renesto P."/>
            <person name="Ogata H."/>
            <person name="La Scola B."/>
            <person name="Susan M."/>
            <person name="Claverie J.-M."/>
        </authorList>
    </citation>
    <scope>NUCLEOTIDE SEQUENCE [LARGE SCALE GENOMIC DNA]</scope>
    <source>
        <strain>Rowbotham-Bradford</strain>
    </source>
</reference>
<organismHost>
    <name type="scientific">Acanthamoeba polyphaga</name>
    <name type="common">Amoeba</name>
    <dbReference type="NCBI Taxonomy" id="5757"/>
</organismHost>
<protein>
    <recommendedName>
        <fullName>Uncharacterized protein R370</fullName>
    </recommendedName>
</protein>
<feature type="chain" id="PRO_0000071273" description="Uncharacterized protein R370">
    <location>
        <begin position="1"/>
        <end position="144"/>
    </location>
</feature>
<feature type="coiled-coil region" evidence="1">
    <location>
        <begin position="23"/>
        <end position="82"/>
    </location>
</feature>
<evidence type="ECO:0000255" key="1"/>